<name>DHI1_CAVPO</name>
<accession>Q6QLL4</accession>
<accession>Q9QZE1</accession>
<sequence length="300" mass="33226">MAFLKKYLLTILMVFLAYYYYSANEKFRPEMLQGKKVIVTGASKGIGREIAYHLAKMGAHVVVTARSKEALQKVVARCLELGAASAHYIAGSMEDMTFAEEFVAEAGNLMGGLDMLILNHVLYNRLTFFHGEIDNVRKSMEVNFHSFVVLSVAAMPMLMQSQGSIAVVSSVAGKITYPLIAPYSASKFALDGFFSTLRSEFLVNKVNVSITLCILGLIDTETAIKATSGIYLGPASPKEECALEIIKGTALRQDEMYYVGSRWVPYLLGNPGRKIMEFLSAAEYNWDNVLSNEKLYGRWA</sequence>
<evidence type="ECO:0000250" key="1"/>
<evidence type="ECO:0000250" key="2">
    <source>
        <dbReference type="UniProtKB" id="P28845"/>
    </source>
</evidence>
<evidence type="ECO:0000250" key="3">
    <source>
        <dbReference type="UniProtKB" id="P50172"/>
    </source>
</evidence>
<evidence type="ECO:0000255" key="4"/>
<evidence type="ECO:0000255" key="5">
    <source>
        <dbReference type="PROSITE-ProRule" id="PRU10001"/>
    </source>
</evidence>
<evidence type="ECO:0000269" key="6">
    <source>
    </source>
</evidence>
<evidence type="ECO:0000269" key="7">
    <source>
    </source>
</evidence>
<evidence type="ECO:0000269" key="8">
    <source>
    </source>
</evidence>
<evidence type="ECO:0000269" key="9">
    <source>
    </source>
</evidence>
<evidence type="ECO:0000303" key="10">
    <source>
    </source>
</evidence>
<evidence type="ECO:0000305" key="11"/>
<evidence type="ECO:0007829" key="12">
    <source>
        <dbReference type="PDB" id="3DWF"/>
    </source>
</evidence>
<evidence type="ECO:0007829" key="13">
    <source>
        <dbReference type="PDB" id="3LZ6"/>
    </source>
</evidence>
<comment type="function">
    <text evidence="2 3 6 9">Controls the reversible conversion of biologically active glucocorticoids such as cortisone to cortisol, and 11-dehydrocorticosterone to corticosterone in the presence of NADP(H) (PubMed:10699594, PubMed:19507261). Participates in the corticosteroid receptor-mediated anti-inflammatory response, as well as metabolic and homeostatic processes (By similarity). Bidirectional in vitro, predominantly functions as a reductase in vivo, thereby increasing the concentration of active glucocorticoids. It has broad substrate specificity, besides glucocorticoids, it accepts other steroid and sterol substrates. Interconverts 7-oxo- and 7-hydroxy-neurosteroids such as 7-oxopregnenolone and 7beta-hydroxypregnenolone, 7-oxodehydroepiandrosterone (3beta-hydroxy-5-androstene-7,17-dione) and 7beta-hydroxydehydroepiandrosterone (3beta,7beta-dihydroxyandrost-5-en-17-one), among others (By similarity). Catalyzes the stereo-specific conversion of the major dietary oxysterol, 7-ketocholesterol (7-oxocholesterol), into the more polar 7-beta-hydroxycholesterol metabolite (By similarity). 7-oxocholesterol is one of the most important oxysterols, it participates in several events such as induction of apoptosis, accumulation in atherosclerotic lesions, lipid peroxidation, and induction of foam cell formation (By similarity). Mediates the 7-oxo reduction of 7-oxolithocholate mainly to chenodeoxycholate, and to a lesser extent to ursodeoxycholate, both in its free form and when conjugated to glycine or taurine, providing a link between glucocorticoid activation and bile acid metabolism (By similarity). Catalyzes the synthesis of 7-beta-25-dihydroxycholesterol from 7-oxo-25-hydroxycholesterol in vitro, which acts as a ligand for the G-protein-coupled receptor (GPCR) Epstein-Barr virus-induced gene 2 (EBI2) and may thereby regulate immune cell migration (By similarity).</text>
</comment>
<comment type="catalytic activity">
    <reaction evidence="6 9">
        <text>an 11beta-hydroxysteroid + NADP(+) = an 11-oxosteroid + NADPH + H(+)</text>
        <dbReference type="Rhea" id="RHEA:11388"/>
        <dbReference type="ChEBI" id="CHEBI:15378"/>
        <dbReference type="ChEBI" id="CHEBI:35346"/>
        <dbReference type="ChEBI" id="CHEBI:47787"/>
        <dbReference type="ChEBI" id="CHEBI:57783"/>
        <dbReference type="ChEBI" id="CHEBI:58349"/>
        <dbReference type="EC" id="1.1.1.146"/>
    </reaction>
    <physiologicalReaction direction="left-to-right" evidence="6 9">
        <dbReference type="Rhea" id="RHEA:11389"/>
    </physiologicalReaction>
    <physiologicalReaction direction="right-to-left" evidence="6 9">
        <dbReference type="Rhea" id="RHEA:11390"/>
    </physiologicalReaction>
</comment>
<comment type="catalytic activity">
    <reaction evidence="6 9">
        <text>cortisone + NADPH + H(+) = cortisol + NADP(+)</text>
        <dbReference type="Rhea" id="RHEA:68616"/>
        <dbReference type="ChEBI" id="CHEBI:15378"/>
        <dbReference type="ChEBI" id="CHEBI:16962"/>
        <dbReference type="ChEBI" id="CHEBI:17650"/>
        <dbReference type="ChEBI" id="CHEBI:57783"/>
        <dbReference type="ChEBI" id="CHEBI:58349"/>
    </reaction>
    <physiologicalReaction direction="left-to-right" evidence="6 9">
        <dbReference type="Rhea" id="RHEA:68617"/>
    </physiologicalReaction>
    <physiologicalReaction direction="right-to-left" evidence="6 9">
        <dbReference type="Rhea" id="RHEA:68618"/>
    </physiologicalReaction>
</comment>
<comment type="catalytic activity">
    <reaction evidence="2">
        <text>corticosterone + NADP(+) = 11-dehydrocorticosterone + NADPH + H(+)</text>
        <dbReference type="Rhea" id="RHEA:42200"/>
        <dbReference type="ChEBI" id="CHEBI:15378"/>
        <dbReference type="ChEBI" id="CHEBI:16827"/>
        <dbReference type="ChEBI" id="CHEBI:57783"/>
        <dbReference type="ChEBI" id="CHEBI:58349"/>
        <dbReference type="ChEBI" id="CHEBI:78600"/>
    </reaction>
    <physiologicalReaction direction="left-to-right" evidence="2">
        <dbReference type="Rhea" id="RHEA:42201"/>
    </physiologicalReaction>
    <physiologicalReaction direction="right-to-left" evidence="2">
        <dbReference type="Rhea" id="RHEA:42202"/>
    </physiologicalReaction>
</comment>
<comment type="catalytic activity">
    <reaction evidence="2">
        <text>a 7beta-hydroxysteroid + NADP(+) = a 7-oxosteroid + NADPH + H(+)</text>
        <dbReference type="Rhea" id="RHEA:20233"/>
        <dbReference type="ChEBI" id="CHEBI:15378"/>
        <dbReference type="ChEBI" id="CHEBI:35349"/>
        <dbReference type="ChEBI" id="CHEBI:47789"/>
        <dbReference type="ChEBI" id="CHEBI:57783"/>
        <dbReference type="ChEBI" id="CHEBI:58349"/>
        <dbReference type="EC" id="1.1.1.201"/>
    </reaction>
    <physiologicalReaction direction="right-to-left" evidence="2">
        <dbReference type="Rhea" id="RHEA:20235"/>
    </physiologicalReaction>
</comment>
<comment type="catalytic activity">
    <reaction evidence="2">
        <text>7-oxocholesterol + NADPH + H(+) = 7beta-hydroxycholesterol + NADP(+)</text>
        <dbReference type="Rhea" id="RHEA:68656"/>
        <dbReference type="ChEBI" id="CHEBI:15378"/>
        <dbReference type="ChEBI" id="CHEBI:42989"/>
        <dbReference type="ChEBI" id="CHEBI:57783"/>
        <dbReference type="ChEBI" id="CHEBI:58349"/>
        <dbReference type="ChEBI" id="CHEBI:64294"/>
    </reaction>
    <physiologicalReaction direction="left-to-right" evidence="2">
        <dbReference type="Rhea" id="RHEA:68657"/>
    </physiologicalReaction>
</comment>
<comment type="catalytic activity">
    <reaction evidence="2">
        <text>chenodeoxycholate + NADP(+) = 7-oxolithocholate + NADPH + H(+)</text>
        <dbReference type="Rhea" id="RHEA:53820"/>
        <dbReference type="ChEBI" id="CHEBI:15378"/>
        <dbReference type="ChEBI" id="CHEBI:36234"/>
        <dbReference type="ChEBI" id="CHEBI:57783"/>
        <dbReference type="ChEBI" id="CHEBI:58349"/>
        <dbReference type="ChEBI" id="CHEBI:78605"/>
    </reaction>
    <physiologicalReaction direction="right-to-left" evidence="2">
        <dbReference type="Rhea" id="RHEA:53822"/>
    </physiologicalReaction>
</comment>
<comment type="catalytic activity">
    <reaction evidence="2">
        <text>7-oxolithocholate + NADPH + H(+) = ursodeoxycholate + NADP(+)</text>
        <dbReference type="Rhea" id="RHEA:47540"/>
        <dbReference type="ChEBI" id="CHEBI:15378"/>
        <dbReference type="ChEBI" id="CHEBI:57783"/>
        <dbReference type="ChEBI" id="CHEBI:58349"/>
        <dbReference type="ChEBI" id="CHEBI:78604"/>
        <dbReference type="ChEBI" id="CHEBI:78605"/>
    </reaction>
    <physiologicalReaction direction="left-to-right" evidence="2">
        <dbReference type="Rhea" id="RHEA:47541"/>
    </physiologicalReaction>
</comment>
<comment type="catalytic activity">
    <reaction evidence="2">
        <text>glycochenodeoxycholate + NADP(+) = 7-oxoglycolithocholate + NADPH + H(+)</text>
        <dbReference type="Rhea" id="RHEA:65056"/>
        <dbReference type="ChEBI" id="CHEBI:15378"/>
        <dbReference type="ChEBI" id="CHEBI:36252"/>
        <dbReference type="ChEBI" id="CHEBI:57783"/>
        <dbReference type="ChEBI" id="CHEBI:58349"/>
        <dbReference type="ChEBI" id="CHEBI:137818"/>
    </reaction>
    <physiologicalReaction direction="right-to-left" evidence="2">
        <dbReference type="Rhea" id="RHEA:65058"/>
    </physiologicalReaction>
</comment>
<comment type="catalytic activity">
    <reaction evidence="2">
        <text>taurochenodeoxycholate + NADP(+) = 7-oxotaurolithocholate + NADPH + H(+)</text>
        <dbReference type="Rhea" id="RHEA:65060"/>
        <dbReference type="ChEBI" id="CHEBI:9407"/>
        <dbReference type="ChEBI" id="CHEBI:15378"/>
        <dbReference type="ChEBI" id="CHEBI:57783"/>
        <dbReference type="ChEBI" id="CHEBI:58349"/>
        <dbReference type="ChEBI" id="CHEBI:137724"/>
    </reaction>
    <physiologicalReaction direction="right-to-left" evidence="2">
        <dbReference type="Rhea" id="RHEA:65062"/>
    </physiologicalReaction>
</comment>
<comment type="catalytic activity">
    <reaction evidence="2">
        <text>tauroursodeoxycholate + NADP(+) = 7-oxotaurolithocholate + NADPH + H(+)</text>
        <dbReference type="Rhea" id="RHEA:68980"/>
        <dbReference type="ChEBI" id="CHEBI:15378"/>
        <dbReference type="ChEBI" id="CHEBI:57783"/>
        <dbReference type="ChEBI" id="CHEBI:58349"/>
        <dbReference type="ChEBI" id="CHEBI:132028"/>
        <dbReference type="ChEBI" id="CHEBI:137724"/>
    </reaction>
    <physiologicalReaction direction="right-to-left" evidence="2">
        <dbReference type="Rhea" id="RHEA:68982"/>
    </physiologicalReaction>
</comment>
<comment type="catalytic activity">
    <reaction evidence="2">
        <text>glycoursodeoxycholate + NADP(+) = 7-oxoglycolithocholate + NADPH + H(+)</text>
        <dbReference type="Rhea" id="RHEA:68976"/>
        <dbReference type="ChEBI" id="CHEBI:15378"/>
        <dbReference type="ChEBI" id="CHEBI:57783"/>
        <dbReference type="ChEBI" id="CHEBI:58349"/>
        <dbReference type="ChEBI" id="CHEBI:132030"/>
        <dbReference type="ChEBI" id="CHEBI:137818"/>
    </reaction>
    <physiologicalReaction direction="right-to-left" evidence="2">
        <dbReference type="Rhea" id="RHEA:68978"/>
    </physiologicalReaction>
</comment>
<comment type="catalytic activity">
    <reaction evidence="2">
        <text>7-oxopregnenolone + NADPH + H(+) = 7beta-hydroxypregnenolone + NADP(+)</text>
        <dbReference type="Rhea" id="RHEA:69436"/>
        <dbReference type="ChEBI" id="CHEBI:15378"/>
        <dbReference type="ChEBI" id="CHEBI:57783"/>
        <dbReference type="ChEBI" id="CHEBI:58349"/>
        <dbReference type="ChEBI" id="CHEBI:183806"/>
        <dbReference type="ChEBI" id="CHEBI:183807"/>
    </reaction>
    <physiologicalReaction direction="left-to-right" evidence="2">
        <dbReference type="Rhea" id="RHEA:69437"/>
    </physiologicalReaction>
</comment>
<comment type="catalytic activity">
    <reaction evidence="2">
        <text>3beta,7alpha-dihydroxyandrost-5-en-17-one + NADP(+) = 3beta-hydroxy-5-androstene-7,17-dione + NADPH + H(+)</text>
        <dbReference type="Rhea" id="RHEA:69440"/>
        <dbReference type="ChEBI" id="CHEBI:15378"/>
        <dbReference type="ChEBI" id="CHEBI:57783"/>
        <dbReference type="ChEBI" id="CHEBI:58349"/>
        <dbReference type="ChEBI" id="CHEBI:81471"/>
        <dbReference type="ChEBI" id="CHEBI:183808"/>
    </reaction>
    <physiologicalReaction direction="left-to-right" evidence="2">
        <dbReference type="Rhea" id="RHEA:69441"/>
    </physiologicalReaction>
</comment>
<comment type="catalytic activity">
    <reaction evidence="2">
        <text>3beta-hydroxy-5-androstene-7,17-dione + NADPH + H(+) = 3beta,7beta-dihydroxyandrost-5-en-17-one + NADP(+)</text>
        <dbReference type="Rhea" id="RHEA:69452"/>
        <dbReference type="ChEBI" id="CHEBI:15378"/>
        <dbReference type="ChEBI" id="CHEBI:57783"/>
        <dbReference type="ChEBI" id="CHEBI:58349"/>
        <dbReference type="ChEBI" id="CHEBI:183368"/>
        <dbReference type="ChEBI" id="CHEBI:183808"/>
    </reaction>
    <physiologicalReaction direction="left-to-right" evidence="2">
        <dbReference type="Rhea" id="RHEA:69453"/>
    </physiologicalReaction>
</comment>
<comment type="catalytic activity">
    <reaction evidence="2">
        <text>3beta-hydroxy-5alpha-androstane-7,17-dione + NADPH + H(+) = 3beta,7beta-dihydroxy-5alpha-androstan-17-one + NADP(+)</text>
        <dbReference type="Rhea" id="RHEA:69456"/>
        <dbReference type="ChEBI" id="CHEBI:15378"/>
        <dbReference type="ChEBI" id="CHEBI:57783"/>
        <dbReference type="ChEBI" id="CHEBI:58349"/>
        <dbReference type="ChEBI" id="CHEBI:79834"/>
        <dbReference type="ChEBI" id="CHEBI:183809"/>
    </reaction>
    <physiologicalReaction direction="left-to-right" evidence="2">
        <dbReference type="Rhea" id="RHEA:69457"/>
    </physiologicalReaction>
</comment>
<comment type="biophysicochemical properties">
    <kinetics>
        <KM evidence="6">2.85 uM for cortisol</KM>
        <KM evidence="6">2.77 uM for cortisone</KM>
        <KM evidence="9">4.09 uM for cortisone</KM>
    </kinetics>
</comment>
<comment type="subunit">
    <text evidence="7 8 9">Homodimer.</text>
</comment>
<comment type="subcellular location">
    <subcellularLocation>
        <location>Endoplasmic reticulum membrane</location>
        <topology>Single-pass type II membrane protein</topology>
    </subcellularLocation>
</comment>
<comment type="tissue specificity">
    <text evidence="6">Widely expressed in all peripheral tissues, with highest expression in liver, followed by kidney and lung, and very low expression in heart, lung, spleen, stomach, small intestine, colon, skin, skeletal muscle, and ovary.</text>
</comment>
<comment type="similarity">
    <text evidence="11">Belongs to the short-chain dehydrogenases/reductases (SDR) family.</text>
</comment>
<protein>
    <recommendedName>
        <fullName evidence="10">11-beta-hydroxysteroid dehydrogenase 1</fullName>
        <shortName>11-DH</shortName>
        <shortName evidence="10">11-beta-HSD1</shortName>
        <ecNumber evidence="6 9">1.1.1.146</ecNumber>
    </recommendedName>
    <alternativeName>
        <fullName>7-oxosteroid reductase</fullName>
        <ecNumber evidence="2">1.1.1.201</ecNumber>
    </alternativeName>
    <alternativeName>
        <fullName>Corticosteroid 11-beta-dehydrogenase isozyme 1</fullName>
    </alternativeName>
</protein>
<dbReference type="EC" id="1.1.1.146" evidence="6 9"/>
<dbReference type="EC" id="1.1.1.201" evidence="2"/>
<dbReference type="EMBL" id="AF188005">
    <property type="protein sequence ID" value="AAF01249.1"/>
    <property type="molecule type" value="mRNA"/>
</dbReference>
<dbReference type="EMBL" id="AY535424">
    <property type="protein sequence ID" value="AAS47491.1"/>
    <property type="molecule type" value="mRNA"/>
</dbReference>
<dbReference type="RefSeq" id="NP_001166328.1">
    <property type="nucleotide sequence ID" value="NM_001172857.1"/>
</dbReference>
<dbReference type="RefSeq" id="XP_013012714.1">
    <property type="nucleotide sequence ID" value="XM_013157260.1"/>
</dbReference>
<dbReference type="PDB" id="1XSE">
    <property type="method" value="X-ray"/>
    <property type="resolution" value="2.50 A"/>
    <property type="chains" value="A/B=24-297"/>
</dbReference>
<dbReference type="PDB" id="3DWF">
    <property type="method" value="X-ray"/>
    <property type="resolution" value="2.20 A"/>
    <property type="chains" value="A/B/C/D=24-299"/>
</dbReference>
<dbReference type="PDB" id="3G49">
    <property type="method" value="X-ray"/>
    <property type="resolution" value="2.50 A"/>
    <property type="chains" value="A/B/C/D=24-300"/>
</dbReference>
<dbReference type="PDB" id="3LZ6">
    <property type="method" value="X-ray"/>
    <property type="resolution" value="1.84 A"/>
    <property type="chains" value="A/B/C/D=26-288"/>
</dbReference>
<dbReference type="PDBsum" id="1XSE"/>
<dbReference type="PDBsum" id="3DWF"/>
<dbReference type="PDBsum" id="3G49"/>
<dbReference type="PDBsum" id="3LZ6"/>
<dbReference type="SMR" id="Q6QLL4"/>
<dbReference type="FunCoup" id="Q6QLL4">
    <property type="interactions" value="278"/>
</dbReference>
<dbReference type="STRING" id="10141.ENSCPOP00000005042"/>
<dbReference type="GlyCosmos" id="Q6QLL4">
    <property type="glycosylation" value="1 site, No reported glycans"/>
</dbReference>
<dbReference type="Ensembl" id="ENSCPOT00000005656.3">
    <property type="protein sequence ID" value="ENSCPOP00000005042.2"/>
    <property type="gene ID" value="ENSCPOG00000005596.4"/>
</dbReference>
<dbReference type="GeneID" id="100135542"/>
<dbReference type="KEGG" id="cpoc:100135542"/>
<dbReference type="CTD" id="3290"/>
<dbReference type="VEuPathDB" id="HostDB:ENSCPOG00000005596"/>
<dbReference type="eggNOG" id="KOG1205">
    <property type="taxonomic scope" value="Eukaryota"/>
</dbReference>
<dbReference type="GeneTree" id="ENSGT00940000160097"/>
<dbReference type="InParanoid" id="Q6QLL4"/>
<dbReference type="OMA" id="SMEDMTF"/>
<dbReference type="OrthoDB" id="1933717at2759"/>
<dbReference type="TreeFam" id="TF329114"/>
<dbReference type="BRENDA" id="1.1.1.146">
    <property type="organism ID" value="1225"/>
</dbReference>
<dbReference type="BRENDA" id="1.1.1.B40">
    <property type="organism ID" value="1225"/>
</dbReference>
<dbReference type="SABIO-RK" id="Q6QLL4"/>
<dbReference type="EvolutionaryTrace" id="Q6QLL4"/>
<dbReference type="Proteomes" id="UP000005447">
    <property type="component" value="Unassembled WGS sequence"/>
</dbReference>
<dbReference type="Bgee" id="ENSCPOG00000005596">
    <property type="expression patterns" value="Expressed in liver and 8 other cell types or tissues"/>
</dbReference>
<dbReference type="GO" id="GO:0005789">
    <property type="term" value="C:endoplasmic reticulum membrane"/>
    <property type="evidence" value="ECO:0007669"/>
    <property type="project" value="UniProtKB-SubCell"/>
</dbReference>
<dbReference type="GO" id="GO:0047022">
    <property type="term" value="F:7-beta-hydroxysteroid dehydrogenase (NADP+) activity"/>
    <property type="evidence" value="ECO:0007669"/>
    <property type="project" value="RHEA"/>
</dbReference>
<dbReference type="GO" id="GO:0102196">
    <property type="term" value="F:cortisol dehydrogenase (NAD+) activity"/>
    <property type="evidence" value="ECO:0007669"/>
    <property type="project" value="RHEA"/>
</dbReference>
<dbReference type="GO" id="GO:0050661">
    <property type="term" value="F:NADP binding"/>
    <property type="evidence" value="ECO:0007669"/>
    <property type="project" value="Ensembl"/>
</dbReference>
<dbReference type="GO" id="GO:0042803">
    <property type="term" value="F:protein homodimerization activity"/>
    <property type="evidence" value="ECO:0007669"/>
    <property type="project" value="Ensembl"/>
</dbReference>
<dbReference type="GO" id="GO:0005496">
    <property type="term" value="F:steroid binding"/>
    <property type="evidence" value="ECO:0007669"/>
    <property type="project" value="TreeGrafter"/>
</dbReference>
<dbReference type="GO" id="GO:0030324">
    <property type="term" value="P:lung development"/>
    <property type="evidence" value="ECO:0007669"/>
    <property type="project" value="Ensembl"/>
</dbReference>
<dbReference type="GO" id="GO:0006706">
    <property type="term" value="P:steroid catabolic process"/>
    <property type="evidence" value="ECO:0007669"/>
    <property type="project" value="TreeGrafter"/>
</dbReference>
<dbReference type="CDD" id="cd05332">
    <property type="entry name" value="11beta-HSD1_like_SDR_c"/>
    <property type="match status" value="1"/>
</dbReference>
<dbReference type="FunFam" id="3.40.50.720:FF:000329">
    <property type="entry name" value="Corticosteroid 11-beta-dehydrogenase isozyme 1"/>
    <property type="match status" value="1"/>
</dbReference>
<dbReference type="Gene3D" id="3.40.50.720">
    <property type="entry name" value="NAD(P)-binding Rossmann-like Domain"/>
    <property type="match status" value="1"/>
</dbReference>
<dbReference type="InterPro" id="IPR051253">
    <property type="entry name" value="11-beta-HSD"/>
</dbReference>
<dbReference type="InterPro" id="IPR036291">
    <property type="entry name" value="NAD(P)-bd_dom_sf"/>
</dbReference>
<dbReference type="InterPro" id="IPR020904">
    <property type="entry name" value="Sc_DH/Rdtase_CS"/>
</dbReference>
<dbReference type="InterPro" id="IPR002347">
    <property type="entry name" value="SDR_fam"/>
</dbReference>
<dbReference type="PANTHER" id="PTHR44279:SF1">
    <property type="entry name" value="11-BETA-HYDROXYSTEROID DEHYDROGENASE 1"/>
    <property type="match status" value="1"/>
</dbReference>
<dbReference type="PANTHER" id="PTHR44279">
    <property type="entry name" value="HYDROXYSTEROID (11-BETA) DEHYDROGENASE 1-LIKE B-RELATED"/>
    <property type="match status" value="1"/>
</dbReference>
<dbReference type="Pfam" id="PF00106">
    <property type="entry name" value="adh_short"/>
    <property type="match status" value="1"/>
</dbReference>
<dbReference type="PRINTS" id="PR00081">
    <property type="entry name" value="GDHRDH"/>
</dbReference>
<dbReference type="SUPFAM" id="SSF51735">
    <property type="entry name" value="NAD(P)-binding Rossmann-fold domains"/>
    <property type="match status" value="1"/>
</dbReference>
<dbReference type="PROSITE" id="PS00061">
    <property type="entry name" value="ADH_SHORT"/>
    <property type="match status" value="1"/>
</dbReference>
<organism>
    <name type="scientific">Cavia porcellus</name>
    <name type="common">Guinea pig</name>
    <dbReference type="NCBI Taxonomy" id="10141"/>
    <lineage>
        <taxon>Eukaryota</taxon>
        <taxon>Metazoa</taxon>
        <taxon>Chordata</taxon>
        <taxon>Craniata</taxon>
        <taxon>Vertebrata</taxon>
        <taxon>Euteleostomi</taxon>
        <taxon>Mammalia</taxon>
        <taxon>Eutheria</taxon>
        <taxon>Euarchontoglires</taxon>
        <taxon>Glires</taxon>
        <taxon>Rodentia</taxon>
        <taxon>Hystricomorpha</taxon>
        <taxon>Caviidae</taxon>
        <taxon>Cavia</taxon>
    </lineage>
</organism>
<proteinExistence type="evidence at protein level"/>
<feature type="chain" id="PRO_0000054618" description="11-beta-hydroxysteroid dehydrogenase 1">
    <location>
        <begin position="1"/>
        <end position="300"/>
    </location>
</feature>
<feature type="topological domain" description="Cytoplasmic" evidence="4">
    <location>
        <begin position="1"/>
        <end position="7"/>
    </location>
</feature>
<feature type="transmembrane region" description="Helical; Signal-anchor for type II membrane protein" evidence="4">
    <location>
        <begin position="8"/>
        <end position="24"/>
    </location>
</feature>
<feature type="topological domain" description="Lumenal" evidence="4">
    <location>
        <begin position="25"/>
        <end position="300"/>
    </location>
</feature>
<feature type="active site" description="Proton acceptor" evidence="5">
    <location>
        <position position="183"/>
    </location>
</feature>
<feature type="binding site" evidence="7 8 9">
    <location>
        <begin position="41"/>
        <end position="67"/>
    </location>
    <ligand>
        <name>NADP(+)</name>
        <dbReference type="ChEBI" id="CHEBI:58349"/>
    </ligand>
</feature>
<feature type="binding site" evidence="7 8 9">
    <location>
        <begin position="92"/>
        <end position="93"/>
    </location>
    <ligand>
        <name>NADP(+)</name>
        <dbReference type="ChEBI" id="CHEBI:58349"/>
    </ligand>
</feature>
<feature type="binding site" evidence="7 8 9">
    <location>
        <begin position="119"/>
        <end position="123"/>
    </location>
    <ligand>
        <name>NADP(+)</name>
        <dbReference type="ChEBI" id="CHEBI:58349"/>
    </ligand>
</feature>
<feature type="binding site" evidence="1">
    <location>
        <position position="170"/>
    </location>
    <ligand>
        <name>substrate</name>
    </ligand>
</feature>
<feature type="binding site" evidence="7 8 9">
    <location>
        <begin position="183"/>
        <end position="187"/>
    </location>
    <ligand>
        <name>NADP(+)</name>
        <dbReference type="ChEBI" id="CHEBI:58349"/>
    </ligand>
</feature>
<feature type="binding site" evidence="7 8 9">
    <location>
        <begin position="218"/>
        <end position="222"/>
    </location>
    <ligand>
        <name>NADP(+)</name>
        <dbReference type="ChEBI" id="CHEBI:58349"/>
    </ligand>
</feature>
<feature type="glycosylation site" description="N-linked (GlcNAc...) asparagine" evidence="4">
    <location>
        <position position="207"/>
    </location>
</feature>
<feature type="sequence conflict" description="In Ref. 1; AAF01249." evidence="11" ref="1">
    <original>S</original>
    <variation>P</variation>
    <location>
        <position position="22"/>
    </location>
</feature>
<feature type="sequence conflict" description="In Ref. 1; AAF01249." evidence="11" ref="1">
    <original>V</original>
    <variation>A</variation>
    <location>
        <position position="103"/>
    </location>
</feature>
<feature type="helix" evidence="13">
    <location>
        <begin position="29"/>
        <end position="32"/>
    </location>
</feature>
<feature type="strand" evidence="13">
    <location>
        <begin position="36"/>
        <end position="41"/>
    </location>
</feature>
<feature type="helix" evidence="13">
    <location>
        <begin position="45"/>
        <end position="56"/>
    </location>
</feature>
<feature type="strand" evidence="13">
    <location>
        <begin position="60"/>
        <end position="66"/>
    </location>
</feature>
<feature type="helix" evidence="13">
    <location>
        <begin position="68"/>
        <end position="81"/>
    </location>
</feature>
<feature type="strand" evidence="13">
    <location>
        <begin position="84"/>
        <end position="90"/>
    </location>
</feature>
<feature type="helix" evidence="13">
    <location>
        <begin position="96"/>
        <end position="110"/>
    </location>
</feature>
<feature type="strand" evidence="13">
    <location>
        <begin position="114"/>
        <end position="118"/>
    </location>
</feature>
<feature type="helix" evidence="13">
    <location>
        <begin position="133"/>
        <end position="143"/>
    </location>
</feature>
<feature type="helix" evidence="13">
    <location>
        <begin position="145"/>
        <end position="161"/>
    </location>
</feature>
<feature type="strand" evidence="13">
    <location>
        <begin position="164"/>
        <end position="170"/>
    </location>
</feature>
<feature type="helix" evidence="13">
    <location>
        <begin position="171"/>
        <end position="173"/>
    </location>
</feature>
<feature type="helix" evidence="13">
    <location>
        <begin position="181"/>
        <end position="203"/>
    </location>
</feature>
<feature type="strand" evidence="13">
    <location>
        <begin position="209"/>
        <end position="215"/>
    </location>
</feature>
<feature type="helix" evidence="13">
    <location>
        <begin position="221"/>
        <end position="227"/>
    </location>
</feature>
<feature type="turn" evidence="13">
    <location>
        <begin position="228"/>
        <end position="230"/>
    </location>
</feature>
<feature type="helix" evidence="13">
    <location>
        <begin position="238"/>
        <end position="250"/>
    </location>
</feature>
<feature type="strand" evidence="13">
    <location>
        <begin position="254"/>
        <end position="260"/>
    </location>
</feature>
<feature type="helix" evidence="13">
    <location>
        <begin position="264"/>
        <end position="268"/>
    </location>
</feature>
<feature type="helix" evidence="13">
    <location>
        <begin position="271"/>
        <end position="281"/>
    </location>
</feature>
<feature type="helix" evidence="12">
    <location>
        <begin position="286"/>
        <end position="290"/>
    </location>
</feature>
<reference key="1">
    <citation type="journal article" date="2000" name="Steroids">
        <title>Guinea pig 11beta-hydroxysteroid dehydrogenase type 1: primary structure and catalytic properties.</title>
        <authorList>
            <person name="Pu X."/>
            <person name="Yang K."/>
        </authorList>
    </citation>
    <scope>NUCLEOTIDE SEQUENCE [MRNA]</scope>
    <scope>FUNCTION</scope>
    <scope>CATALYTIC ACTIVITY</scope>
    <scope>TISSUE SPECIFICITY</scope>
    <scope>BIOPHYSICOCHEMICAL PROPERTIES</scope>
    <source>
        <strain>Hartley</strain>
        <tissue>Liver</tissue>
    </source>
</reference>
<reference key="2">
    <citation type="submission" date="2004-01" db="EMBL/GenBank/DDBJ databases">
        <title>Guinea pig 11-beta-hydroxysteroid dehydrogenase type 1: species specific properties.</title>
        <authorList>
            <person name="Odermatt A."/>
            <person name="Kadereit B."/>
        </authorList>
    </citation>
    <scope>NUCLEOTIDE SEQUENCE [MRNA]</scope>
</reference>
<reference key="3">
    <citation type="journal article" date="2009" name="Protein Sci.">
        <title>Mutations of key hydrophobic surface residues of 11 beta-hydroxysteroid dehydrogenase type 1 increase solubility and monodispersity in a bacterial expression system.</title>
        <authorList>
            <person name="Lawson A.J."/>
            <person name="Walker E.A."/>
            <person name="White S.A."/>
            <person name="Dafforn T.R."/>
            <person name="Stewart P.M."/>
            <person name="Ride J.P."/>
        </authorList>
    </citation>
    <scope>X-RAY CRYSTALLOGRAPHY (2.2 ANGSTROMS) OF 24-299 IN COMPLEX WITH NADP</scope>
    <scope>FUNCTION</scope>
    <scope>CATALYTIC ACTIVITY</scope>
    <scope>BIOPHYSICOCHEMICAL PROPERTIES</scope>
</reference>
<reference key="4">
    <citation type="journal article" date="2005" name="J. Biol. Chem.">
        <title>The crystal structure of guinea pig 11beta-hydroxysteroid dehydrogenase type 1 provides a model for enzyme-lipid bilayer interactions.</title>
        <authorList>
            <person name="Ogg D."/>
            <person name="Elleby B."/>
            <person name="Norstroem C."/>
            <person name="Stefansson K."/>
            <person name="Abrahmsen L."/>
            <person name="Oppermann U."/>
            <person name="Svensson S."/>
        </authorList>
    </citation>
    <scope>X-RAY CRYSTALLOGRAPHY (2.5 ANGSTROMS) OF 25-297 IN COMPLEX WITH NADP</scope>
    <scope>HOMODIMERIZATION</scope>
</reference>
<reference key="5">
    <citation type="journal article" date="2009" name="Bioorg. Med. Chem. Lett.">
        <title>N-(Pyridin-2-yl) arylsulfonamide inhibitors of 11beta-hydroxysteroid dehydrogenase type 1: Discovery of PF-915275.</title>
        <authorList>
            <person name="Siu M."/>
            <person name="Johnson T.O."/>
            <person name="Wang Y."/>
            <person name="Nair S.K."/>
            <person name="Taylor W.D."/>
            <person name="Cripps S.J."/>
            <person name="Matthews J.J."/>
            <person name="Edwards M.P."/>
            <person name="Pauly T.A."/>
            <person name="Ermolieff J."/>
            <person name="Castro A."/>
            <person name="Hosea N.A."/>
            <person name="LaPaglia A."/>
            <person name="Fanjul A.N."/>
            <person name="Vogel J.E."/>
        </authorList>
    </citation>
    <scope>X-RAY CRYSTALLOGRAPHY (2.5 ANGSTROMS) OF 24-300 IN COMPLEX WITH NADP AND SYNTHETIC INHIBITOR</scope>
</reference>
<keyword id="KW-0002">3D-structure</keyword>
<keyword id="KW-0256">Endoplasmic reticulum</keyword>
<keyword id="KW-0325">Glycoprotein</keyword>
<keyword id="KW-0443">Lipid metabolism</keyword>
<keyword id="KW-0472">Membrane</keyword>
<keyword id="KW-0521">NADP</keyword>
<keyword id="KW-0560">Oxidoreductase</keyword>
<keyword id="KW-1185">Reference proteome</keyword>
<keyword id="KW-0735">Signal-anchor</keyword>
<keyword id="KW-0753">Steroid metabolism</keyword>
<keyword id="KW-0812">Transmembrane</keyword>
<keyword id="KW-1133">Transmembrane helix</keyword>
<gene>
    <name type="primary">HSD11B1</name>
</gene>